<keyword id="KW-0002">3D-structure</keyword>
<keyword id="KW-0256">Endoplasmic reticulum</keyword>
<keyword id="KW-0444">Lipid biosynthesis</keyword>
<keyword id="KW-0443">Lipid metabolism</keyword>
<keyword id="KW-0460">Magnesium</keyword>
<keyword id="KW-0472">Membrane</keyword>
<keyword id="KW-0479">Metal-binding</keyword>
<keyword id="KW-0492">Microsome</keyword>
<keyword id="KW-0496">Mitochondrion</keyword>
<keyword id="KW-1000">Mitochondrion outer membrane</keyword>
<keyword id="KW-0594">Phospholipid biosynthesis</keyword>
<keyword id="KW-1208">Phospholipid metabolism</keyword>
<keyword id="KW-1185">Reference proteome</keyword>
<keyword id="KW-0808">Transferase</keyword>
<keyword id="KW-0812">Transmembrane</keyword>
<keyword id="KW-1133">Transmembrane helix</keyword>
<name>CPT1_YEAST</name>
<sequence>MGFFIPQSSLGNLKLYKYQSDDRSFLSNHVLRPFWRKFATIFPLWMAPNLVTLLGFCFIIFNVLTTLYYDPYFDQESPRWTYFSYAIGLFLYQTFDACDGMHARRTGQQGPLGELFDHCIDSINTTLSMIPVCSMTGMGYTYMTIFSQFAILCSFYLSTWEEYHTHKLYLAEFCGPVEGIIVLCISFIAVGIYGPQTIWHTKVAQFSWQDFVFDVETVHLMYAFCTGALIFNIVTAHTNVVRYYESQSTKSATPSKTAENISKAVNGLLPFFAYFSSIFTLVLIQPSFISLALILSIGFSVAFVVGRMIIAHLTMQPFPMVNFPFLIPTIQLVLYAFMVYVLDYQKGSIVSALVWMGLGLTLAIHGMFINDIIYDITTFLDIYALSIKHPKEI</sequence>
<organism>
    <name type="scientific">Saccharomyces cerevisiae (strain ATCC 204508 / S288c)</name>
    <name type="common">Baker's yeast</name>
    <dbReference type="NCBI Taxonomy" id="559292"/>
    <lineage>
        <taxon>Eukaryota</taxon>
        <taxon>Fungi</taxon>
        <taxon>Dikarya</taxon>
        <taxon>Ascomycota</taxon>
        <taxon>Saccharomycotina</taxon>
        <taxon>Saccharomycetes</taxon>
        <taxon>Saccharomycetales</taxon>
        <taxon>Saccharomycetaceae</taxon>
        <taxon>Saccharomyces</taxon>
    </lineage>
</organism>
<evidence type="ECO:0000255" key="1"/>
<evidence type="ECO:0000269" key="2">
    <source>
    </source>
</evidence>
<evidence type="ECO:0000269" key="3">
    <source>
    </source>
</evidence>
<evidence type="ECO:0000269" key="4">
    <source>
    </source>
</evidence>
<evidence type="ECO:0000269" key="5">
    <source>
    </source>
</evidence>
<evidence type="ECO:0000269" key="6">
    <source>
    </source>
</evidence>
<evidence type="ECO:0000269" key="7">
    <source>
    </source>
</evidence>
<evidence type="ECO:0000269" key="8">
    <source>
    </source>
</evidence>
<evidence type="ECO:0000305" key="9"/>
<evidence type="ECO:0000305" key="10">
    <source>
    </source>
</evidence>
<evidence type="ECO:0007829" key="11">
    <source>
        <dbReference type="PDB" id="8URP"/>
    </source>
</evidence>
<evidence type="ECO:0007829" key="12">
    <source>
        <dbReference type="PDB" id="8URT"/>
    </source>
</evidence>
<proteinExistence type="evidence at protein level"/>
<accession>P17898</accession>
<accession>D6W152</accession>
<feature type="chain" id="PRO_0000056808" description="Cholinephosphotransferase 1">
    <location>
        <begin position="1"/>
        <end position="393"/>
    </location>
</feature>
<feature type="topological domain" description="Lumenal" evidence="1">
    <location>
        <begin position="1"/>
        <end position="40"/>
    </location>
</feature>
<feature type="transmembrane region" description="Helical" evidence="1">
    <location>
        <begin position="41"/>
        <end position="61"/>
    </location>
</feature>
<feature type="topological domain" description="Cytoplasmic" evidence="1">
    <location>
        <begin position="62"/>
        <end position="172"/>
    </location>
</feature>
<feature type="transmembrane region" description="Helical" evidence="1">
    <location>
        <begin position="173"/>
        <end position="193"/>
    </location>
</feature>
<feature type="topological domain" description="Lumenal" evidence="1">
    <location>
        <begin position="194"/>
        <end position="210"/>
    </location>
</feature>
<feature type="transmembrane region" description="Helical" evidence="1">
    <location>
        <begin position="211"/>
        <end position="231"/>
    </location>
</feature>
<feature type="topological domain" description="Cytoplasmic" evidence="1">
    <location>
        <begin position="232"/>
        <end position="263"/>
    </location>
</feature>
<feature type="transmembrane region" description="Helical" evidence="1">
    <location>
        <begin position="264"/>
        <end position="284"/>
    </location>
</feature>
<feature type="topological domain" description="Lumenal" evidence="1">
    <location>
        <position position="285"/>
    </location>
</feature>
<feature type="transmembrane region" description="Helical" evidence="1">
    <location>
        <begin position="286"/>
        <end position="306"/>
    </location>
</feature>
<feature type="topological domain" description="Cytoplasmic" evidence="1">
    <location>
        <begin position="307"/>
        <end position="320"/>
    </location>
</feature>
<feature type="transmembrane region" description="Helical" evidence="1">
    <location>
        <begin position="321"/>
        <end position="341"/>
    </location>
</feature>
<feature type="topological domain" description="Lumenal" evidence="1">
    <location>
        <begin position="342"/>
        <end position="348"/>
    </location>
</feature>
<feature type="transmembrane region" description="Helical" evidence="1">
    <location>
        <begin position="349"/>
        <end position="369"/>
    </location>
</feature>
<feature type="topological domain" description="Cytoplasmic" evidence="1">
    <location>
        <begin position="370"/>
        <end position="393"/>
    </location>
</feature>
<feature type="helix" evidence="11">
    <location>
        <begin position="8"/>
        <end position="14"/>
    </location>
</feature>
<feature type="strand" evidence="11">
    <location>
        <begin position="20"/>
        <end position="22"/>
    </location>
</feature>
<feature type="helix" evidence="11">
    <location>
        <begin position="25"/>
        <end position="29"/>
    </location>
</feature>
<feature type="helix" evidence="11">
    <location>
        <begin position="32"/>
        <end position="39"/>
    </location>
</feature>
<feature type="strand" evidence="12">
    <location>
        <begin position="44"/>
        <end position="46"/>
    </location>
</feature>
<feature type="helix" evidence="11">
    <location>
        <begin position="48"/>
        <end position="69"/>
    </location>
</feature>
<feature type="helix" evidence="11">
    <location>
        <begin position="80"/>
        <end position="105"/>
    </location>
</feature>
<feature type="helix" evidence="11">
    <location>
        <begin position="111"/>
        <end position="127"/>
    </location>
</feature>
<feature type="helix" evidence="11">
    <location>
        <begin position="129"/>
        <end position="136"/>
    </location>
</feature>
<feature type="helix" evidence="11">
    <location>
        <begin position="142"/>
        <end position="165"/>
    </location>
</feature>
<feature type="strand" evidence="11">
    <location>
        <begin position="166"/>
        <end position="170"/>
    </location>
</feature>
<feature type="turn" evidence="11">
    <location>
        <begin position="175"/>
        <end position="177"/>
    </location>
</feature>
<feature type="helix" evidence="11">
    <location>
        <begin position="178"/>
        <end position="192"/>
    </location>
</feature>
<feature type="helix" evidence="11">
    <location>
        <begin position="195"/>
        <end position="199"/>
    </location>
</feature>
<feature type="strand" evidence="12">
    <location>
        <begin position="202"/>
        <end position="204"/>
    </location>
</feature>
<feature type="strand" evidence="11">
    <location>
        <begin position="208"/>
        <end position="211"/>
    </location>
</feature>
<feature type="helix" evidence="11">
    <location>
        <begin position="217"/>
        <end position="247"/>
    </location>
</feature>
<feature type="helix" evidence="11">
    <location>
        <begin position="248"/>
        <end position="250"/>
    </location>
</feature>
<feature type="strand" evidence="11">
    <location>
        <begin position="254"/>
        <end position="256"/>
    </location>
</feature>
<feature type="helix" evidence="11">
    <location>
        <begin position="257"/>
        <end position="265"/>
    </location>
</feature>
<feature type="helix" evidence="11">
    <location>
        <begin position="266"/>
        <end position="268"/>
    </location>
</feature>
<feature type="helix" evidence="11">
    <location>
        <begin position="269"/>
        <end position="284"/>
    </location>
</feature>
<feature type="helix" evidence="11">
    <location>
        <begin position="286"/>
        <end position="288"/>
    </location>
</feature>
<feature type="helix" evidence="11">
    <location>
        <begin position="291"/>
        <end position="314"/>
    </location>
</feature>
<feature type="helix" evidence="11">
    <location>
        <begin position="323"/>
        <end position="326"/>
    </location>
</feature>
<feature type="helix" evidence="11">
    <location>
        <begin position="327"/>
        <end position="340"/>
    </location>
</feature>
<feature type="turn" evidence="11">
    <location>
        <begin position="346"/>
        <end position="348"/>
    </location>
</feature>
<feature type="helix" evidence="11">
    <location>
        <begin position="349"/>
        <end position="380"/>
    </location>
</feature>
<feature type="strand" evidence="11">
    <location>
        <begin position="384"/>
        <end position="386"/>
    </location>
</feature>
<reference key="1">
    <citation type="journal article" date="1990" name="J. Biol. Chem.">
        <title>The sn-1,2-diacylglycerol cholinephosphotransferase of Saccharomyces cerevisiae. Nucleotide sequence, transcriptional mapping, and gene product analysis of the CPT1 gene.</title>
        <authorList>
            <person name="Hjelmstad R.H."/>
            <person name="Bell R.M."/>
        </authorList>
    </citation>
    <scope>NUCLEOTIDE SEQUENCE [GENOMIC DNA]</scope>
</reference>
<reference key="2">
    <citation type="journal article" date="1995" name="Yeast">
        <title>A 43.5 kb segment of yeast chromosome XIV, which contains MFA2, MEP2, CAP/SRV2, NAM9, FKB1/FPR1/RBP1, MOM22 and CPT1, predicts an adenosine deaminase gene and 14 new open reading frames.</title>
        <authorList>
            <person name="Mallet L."/>
            <person name="Bussereau F."/>
            <person name="Jacquet M."/>
        </authorList>
    </citation>
    <scope>NUCLEOTIDE SEQUENCE [GENOMIC DNA]</scope>
    <source>
        <strain>ATCC 204508 / S288c</strain>
    </source>
</reference>
<reference key="3">
    <citation type="journal article" date="1997" name="Nature">
        <title>The nucleotide sequence of Saccharomyces cerevisiae chromosome XIV and its evolutionary implications.</title>
        <authorList>
            <person name="Philippsen P."/>
            <person name="Kleine K."/>
            <person name="Poehlmann R."/>
            <person name="Duesterhoeft A."/>
            <person name="Hamberg K."/>
            <person name="Hegemann J.H."/>
            <person name="Obermaier B."/>
            <person name="Urrestarazu L.A."/>
            <person name="Aert R."/>
            <person name="Albermann K."/>
            <person name="Altmann R."/>
            <person name="Andre B."/>
            <person name="Baladron V."/>
            <person name="Ballesta J.P.G."/>
            <person name="Becam A.-M."/>
            <person name="Beinhauer J.D."/>
            <person name="Boskovic J."/>
            <person name="Buitrago M.J."/>
            <person name="Bussereau F."/>
            <person name="Coster F."/>
            <person name="Crouzet M."/>
            <person name="D'Angelo M."/>
            <person name="Dal Pero F."/>
            <person name="De Antoni A."/>
            <person name="del Rey F."/>
            <person name="Doignon F."/>
            <person name="Domdey H."/>
            <person name="Dubois E."/>
            <person name="Fiedler T.A."/>
            <person name="Fleig U."/>
            <person name="Floeth M."/>
            <person name="Fritz C."/>
            <person name="Gaillardin C."/>
            <person name="Garcia-Cantalejo J.M."/>
            <person name="Glansdorff N."/>
            <person name="Goffeau A."/>
            <person name="Gueldener U."/>
            <person name="Herbert C.J."/>
            <person name="Heumann K."/>
            <person name="Heuss-Neitzel D."/>
            <person name="Hilbert H."/>
            <person name="Hinni K."/>
            <person name="Iraqui Houssaini I."/>
            <person name="Jacquet M."/>
            <person name="Jimenez A."/>
            <person name="Jonniaux J.-L."/>
            <person name="Karpfinger-Hartl L."/>
            <person name="Lanfranchi G."/>
            <person name="Lepingle A."/>
            <person name="Levesque H."/>
            <person name="Lyck R."/>
            <person name="Maftahi M."/>
            <person name="Mallet L."/>
            <person name="Maurer C.T.C."/>
            <person name="Messenguy F."/>
            <person name="Mewes H.-W."/>
            <person name="Moestl D."/>
            <person name="Nasr F."/>
            <person name="Nicaud J.-M."/>
            <person name="Niedenthal R.K."/>
            <person name="Pandolfo D."/>
            <person name="Pierard A."/>
            <person name="Piravandi E."/>
            <person name="Planta R.J."/>
            <person name="Pohl T.M."/>
            <person name="Purnelle B."/>
            <person name="Rebischung C."/>
            <person name="Remacha M.A."/>
            <person name="Revuelta J.L."/>
            <person name="Rinke M."/>
            <person name="Saiz J.E."/>
            <person name="Sartorello F."/>
            <person name="Scherens B."/>
            <person name="Sen-Gupta M."/>
            <person name="Soler-Mira A."/>
            <person name="Urbanus J.H.M."/>
            <person name="Valle G."/>
            <person name="Van Dyck L."/>
            <person name="Verhasselt P."/>
            <person name="Vierendeels F."/>
            <person name="Vissers S."/>
            <person name="Voet M."/>
            <person name="Volckaert G."/>
            <person name="Wach A."/>
            <person name="Wambutt R."/>
            <person name="Wedler H."/>
            <person name="Zollner A."/>
            <person name="Hani J."/>
        </authorList>
    </citation>
    <scope>NUCLEOTIDE SEQUENCE [LARGE SCALE GENOMIC DNA]</scope>
    <source>
        <strain>ATCC 204508 / S288c</strain>
    </source>
</reference>
<reference key="4">
    <citation type="journal article" date="2014" name="G3 (Bethesda)">
        <title>The reference genome sequence of Saccharomyces cerevisiae: Then and now.</title>
        <authorList>
            <person name="Engel S.R."/>
            <person name="Dietrich F.S."/>
            <person name="Fisk D.G."/>
            <person name="Binkley G."/>
            <person name="Balakrishnan R."/>
            <person name="Costanzo M.C."/>
            <person name="Dwight S.S."/>
            <person name="Hitz B.C."/>
            <person name="Karra K."/>
            <person name="Nash R.S."/>
            <person name="Weng S."/>
            <person name="Wong E.D."/>
            <person name="Lloyd P."/>
            <person name="Skrzypek M.S."/>
            <person name="Miyasato S.R."/>
            <person name="Simison M."/>
            <person name="Cherry J.M."/>
        </authorList>
    </citation>
    <scope>GENOME REANNOTATION</scope>
    <source>
        <strain>ATCC 204508 / S288c</strain>
    </source>
</reference>
<reference key="5">
    <citation type="journal article" date="1986" name="J. Bacteriol.">
        <title>Subcellular and submitochondrial localization of phospholipid-synthesizing enzymes in Saccharomyces cerevisiae.</title>
        <authorList>
            <person name="Kuchler K."/>
            <person name="Daum G."/>
            <person name="Paltauf F."/>
        </authorList>
    </citation>
    <scope>SUBCELLULAR LOCATION</scope>
</reference>
<reference key="6">
    <citation type="journal article" date="1987" name="J. Biol. Chem.">
        <title>Mutants of Saccharomyces cerevisiae defective in sn-1,2-diacylglycerol cholinephosphotransferase. Isolation, characterization, and cloning of the CPT1 gene.</title>
        <authorList>
            <person name="Hjelmstad R.H."/>
            <person name="Bell R.M."/>
        </authorList>
    </citation>
    <scope>FUNCTION</scope>
</reference>
<reference key="7">
    <citation type="journal article" date="1991" name="J. Biol. Chem.">
        <title>sn-1,2-diacylglycerol choline- and ethanolaminephosphotransferases in Saccharomyces cerevisiae. Mixed micellar analysis of the CPT1 and EPT1 gene products.</title>
        <authorList>
            <person name="Hjelmstad R.H."/>
            <person name="Bell R.M."/>
        </authorList>
    </citation>
    <scope>CATALYTIC ACTIVITY</scope>
    <scope>FUNCTION</scope>
    <scope>COFACTOR</scope>
    <scope>ACTIVITY REGULATION</scope>
    <scope>BIOPHYSICOCHEMICAL PROPERTIES</scope>
</reference>
<reference key="8">
    <citation type="journal article" date="1994" name="J. Bacteriol.">
        <title>Functional redundancy of CDP-ethanolamine and CDP-choline pathway enzymes in phospholipid biosynthesis: ethanolamine-dependent effects on steady-state membrane phospholipid composition in Saccharomyces cerevisiae.</title>
        <authorList>
            <person name="McGee T.P."/>
            <person name="Skinner H.B."/>
            <person name="Bankaitis V.A."/>
        </authorList>
    </citation>
    <scope>FUNCTION</scope>
</reference>
<reference key="9">
    <citation type="journal article" date="1994" name="J. Biol. Chem.">
        <title>Phosphatidylcholine biosynthesis in Saccharomyces cerevisiae. Regulatory insights from studies employing null and chimeric sn-1,2-diacylglycerol choline- and ethanolaminephosphotransferases.</title>
        <authorList>
            <person name="McMaster C.R."/>
            <person name="Bell R.M."/>
        </authorList>
    </citation>
    <scope>FUNCTION</scope>
</reference>
<reference key="10">
    <citation type="journal article" date="1994" name="J. Biol. Chem.">
        <title>Studies employing Saccharomyces cerevisiae cpt1 and ept1 null mutants implicate the CPT1 gene in coordinate regulation of phospholipid biosynthesis.</title>
        <authorList>
            <person name="Morash S.C."/>
            <person name="McMaster C.R."/>
            <person name="Hjelmstad R.H."/>
            <person name="Bell R.M."/>
        </authorList>
    </citation>
    <scope>INDUCTION</scope>
</reference>
<reference key="11">
    <citation type="journal article" date="1995" name="FEBS Lett.">
        <title>Phospholipid-synthesizing enzymes in Golgi membranes of the yeast, Saccharomyces cerevisiae.</title>
        <authorList>
            <person name="Leber A."/>
            <person name="Hrastnik C."/>
            <person name="Daum G."/>
        </authorList>
    </citation>
    <scope>SUBCELLULAR LOCATION</scope>
</reference>
<reference key="12">
    <citation type="journal article" date="2003" name="Genome Biol.">
        <title>Reinvestigation of the Saccharomyces cerevisiae genome annotation by comparison to the genome of a related fungus: Ashbya gossypii.</title>
        <authorList>
            <person name="Brachat S."/>
            <person name="Dietrich F.S."/>
            <person name="Voegeli S."/>
            <person name="Zhang Z."/>
            <person name="Stuart L."/>
            <person name="Lerch A."/>
            <person name="Gates K."/>
            <person name="Gaffney T.D."/>
            <person name="Philippsen P."/>
        </authorList>
    </citation>
    <scope>REVISION OF GENE MODEL</scope>
</reference>
<reference key="13">
    <citation type="journal article" date="2003" name="Nature">
        <title>Global analysis of protein localization in budding yeast.</title>
        <authorList>
            <person name="Huh W.-K."/>
            <person name="Falvo J.V."/>
            <person name="Gerke L.C."/>
            <person name="Carroll A.S."/>
            <person name="Howson R.W."/>
            <person name="Weissman J.S."/>
            <person name="O'Shea E.K."/>
        </authorList>
    </citation>
    <scope>SUBCELLULAR LOCATION [LARGE SCALE ANALYSIS]</scope>
</reference>
<reference key="14">
    <citation type="journal article" date="2003" name="Nature">
        <title>Global analysis of protein expression in yeast.</title>
        <authorList>
            <person name="Ghaemmaghami S."/>
            <person name="Huh W.-K."/>
            <person name="Bower K."/>
            <person name="Howson R.W."/>
            <person name="Belle A."/>
            <person name="Dephoure N."/>
            <person name="O'Shea E.K."/>
            <person name="Weissman J.S."/>
        </authorList>
    </citation>
    <scope>LEVEL OF PROTEIN EXPRESSION [LARGE SCALE ANALYSIS]</scope>
</reference>
<reference key="15">
    <citation type="journal article" date="2004" name="FEBS Lett.">
        <title>The selective utilization of substrates in vivo by the phosphatidylethanolamine and phosphatidylcholine biosynthetic enzymes Ept1p and Cpt1p in yeast.</title>
        <authorList>
            <person name="Boumann H.A."/>
            <person name="de Kruijff B."/>
            <person name="Heck A.J."/>
            <person name="de Kroon A.I."/>
        </authorList>
    </citation>
    <scope>FUNCTION</scope>
    <scope>CATALYTIC ACTIVITY</scope>
    <scope>SUBSTRATE SPECIFICITY</scope>
</reference>
<protein>
    <recommendedName>
        <fullName>Cholinephosphotransferase 1</fullName>
        <ecNumber>2.7.8.2</ecNumber>
    </recommendedName>
    <alternativeName>
        <fullName>Aminoalcohol phosphotransferase CPT1</fullName>
    </alternativeName>
    <alternativeName>
        <fullName>Diacylglycerol cholinephosphotransferase 1</fullName>
    </alternativeName>
    <alternativeName>
        <fullName>Sn-1,2-diacylglycerol cholinephosphotransferase</fullName>
        <shortName>CHOPT</shortName>
    </alternativeName>
</protein>
<dbReference type="EC" id="2.7.8.2"/>
<dbReference type="EMBL" id="J05203">
    <property type="protein sequence ID" value="AAA63571.1"/>
    <property type="status" value="ALT_INIT"/>
    <property type="molecule type" value="Genomic_DNA"/>
</dbReference>
<dbReference type="EMBL" id="Z46843">
    <property type="protein sequence ID" value="CAA86895.1"/>
    <property type="status" value="ALT_INIT"/>
    <property type="molecule type" value="Genomic_DNA"/>
</dbReference>
<dbReference type="EMBL" id="Z71406">
    <property type="protein sequence ID" value="CAA96012.1"/>
    <property type="status" value="ALT_SEQ"/>
    <property type="molecule type" value="Genomic_DNA"/>
</dbReference>
<dbReference type="EMBL" id="BK006947">
    <property type="protein sequence ID" value="DAA10418.1"/>
    <property type="molecule type" value="Genomic_DNA"/>
</dbReference>
<dbReference type="PIR" id="S63075">
    <property type="entry name" value="S63075"/>
</dbReference>
<dbReference type="RefSeq" id="NP_014269.4">
    <property type="nucleotide sequence ID" value="NM_001182968.3"/>
</dbReference>
<dbReference type="PDB" id="8UL9">
    <property type="method" value="EM"/>
    <property type="resolution" value="3.20 A"/>
    <property type="chains" value="A/B=2-388"/>
</dbReference>
<dbReference type="PDB" id="8URP">
    <property type="method" value="EM"/>
    <property type="resolution" value="2.90 A"/>
    <property type="chains" value="A/B=2-388"/>
</dbReference>
<dbReference type="PDB" id="8URT">
    <property type="method" value="EM"/>
    <property type="resolution" value="3.10 A"/>
    <property type="chains" value="A/B=2-393"/>
</dbReference>
<dbReference type="PDBsum" id="8UL9"/>
<dbReference type="PDBsum" id="8URP"/>
<dbReference type="PDBsum" id="8URT"/>
<dbReference type="EMDB" id="EMD-42357"/>
<dbReference type="EMDB" id="EMD-42496"/>
<dbReference type="EMDB" id="EMD-42500"/>
<dbReference type="EMDB" id="EMD-46969"/>
<dbReference type="SMR" id="P17898"/>
<dbReference type="BioGRID" id="35697">
    <property type="interactions" value="125"/>
</dbReference>
<dbReference type="DIP" id="DIP-7848N"/>
<dbReference type="FunCoup" id="P17898">
    <property type="interactions" value="653"/>
</dbReference>
<dbReference type="IntAct" id="P17898">
    <property type="interactions" value="20"/>
</dbReference>
<dbReference type="MINT" id="P17898"/>
<dbReference type="STRING" id="4932.YNL130C"/>
<dbReference type="SwissLipids" id="SLP:000000070"/>
<dbReference type="iPTMnet" id="P17898"/>
<dbReference type="PaxDb" id="4932-YNL130C"/>
<dbReference type="PeptideAtlas" id="P17898"/>
<dbReference type="EnsemblFungi" id="YNL130C_mRNA">
    <property type="protein sequence ID" value="YNL130C"/>
    <property type="gene ID" value="YNL130C"/>
</dbReference>
<dbReference type="GeneID" id="855593"/>
<dbReference type="KEGG" id="sce:YNL130C"/>
<dbReference type="AGR" id="SGD:S000005074"/>
<dbReference type="SGD" id="S000005074">
    <property type="gene designation" value="CPT1"/>
</dbReference>
<dbReference type="VEuPathDB" id="FungiDB:YNL130C"/>
<dbReference type="eggNOG" id="KOG2877">
    <property type="taxonomic scope" value="Eukaryota"/>
</dbReference>
<dbReference type="GeneTree" id="ENSGT00950000183117"/>
<dbReference type="HOGENOM" id="CLU_035066_5_2_1"/>
<dbReference type="InParanoid" id="P17898"/>
<dbReference type="OMA" id="RYASGVC"/>
<dbReference type="OrthoDB" id="196717at2759"/>
<dbReference type="BioCyc" id="MetaCyc:YNL130C-MONOMER"/>
<dbReference type="BioCyc" id="YEAST:YNL130C-MONOMER"/>
<dbReference type="BRENDA" id="2.7.8.2">
    <property type="organism ID" value="984"/>
</dbReference>
<dbReference type="Reactome" id="R-SCE-1483191">
    <property type="pathway name" value="Synthesis of PC"/>
</dbReference>
<dbReference type="Reactome" id="R-SCE-1483213">
    <property type="pathway name" value="Synthesis of PE"/>
</dbReference>
<dbReference type="SABIO-RK" id="P17898"/>
<dbReference type="UniPathway" id="UPA00753">
    <property type="reaction ID" value="UER00740"/>
</dbReference>
<dbReference type="BioGRID-ORCS" id="855593">
    <property type="hits" value="1 hit in 10 CRISPR screens"/>
</dbReference>
<dbReference type="PRO" id="PR:P17898"/>
<dbReference type="Proteomes" id="UP000002311">
    <property type="component" value="Chromosome XIV"/>
</dbReference>
<dbReference type="RNAct" id="P17898">
    <property type="molecule type" value="protein"/>
</dbReference>
<dbReference type="GO" id="GO:0005783">
    <property type="term" value="C:endoplasmic reticulum"/>
    <property type="evidence" value="ECO:0007005"/>
    <property type="project" value="SGD"/>
</dbReference>
<dbReference type="GO" id="GO:0005789">
    <property type="term" value="C:endoplasmic reticulum membrane"/>
    <property type="evidence" value="ECO:0007669"/>
    <property type="project" value="UniProtKB-SubCell"/>
</dbReference>
<dbReference type="GO" id="GO:0005794">
    <property type="term" value="C:Golgi apparatus"/>
    <property type="evidence" value="ECO:0000314"/>
    <property type="project" value="SGD"/>
</dbReference>
<dbReference type="GO" id="GO:0005741">
    <property type="term" value="C:mitochondrial outer membrane"/>
    <property type="evidence" value="ECO:0000314"/>
    <property type="project" value="SGD"/>
</dbReference>
<dbReference type="GO" id="GO:0004142">
    <property type="term" value="F:diacylglycerol cholinephosphotransferase activity"/>
    <property type="evidence" value="ECO:0000314"/>
    <property type="project" value="SGD"/>
</dbReference>
<dbReference type="GO" id="GO:0046872">
    <property type="term" value="F:metal ion binding"/>
    <property type="evidence" value="ECO:0007669"/>
    <property type="project" value="UniProtKB-KW"/>
</dbReference>
<dbReference type="GO" id="GO:0006657">
    <property type="term" value="P:CDP-choline pathway"/>
    <property type="evidence" value="ECO:0000314"/>
    <property type="project" value="SGD"/>
</dbReference>
<dbReference type="FunFam" id="1.20.120.1760:FF:000012">
    <property type="entry name" value="sn-1,2-diacylglycerol cholinephosphotransferase"/>
    <property type="match status" value="1"/>
</dbReference>
<dbReference type="Gene3D" id="1.20.120.1760">
    <property type="match status" value="1"/>
</dbReference>
<dbReference type="InterPro" id="IPR000462">
    <property type="entry name" value="CDP-OH_P_trans"/>
</dbReference>
<dbReference type="InterPro" id="IPR043130">
    <property type="entry name" value="CDP-OH_PTrfase_TM_dom"/>
</dbReference>
<dbReference type="InterPro" id="IPR048254">
    <property type="entry name" value="CDP_ALCOHOL_P_TRANSF_CS"/>
</dbReference>
<dbReference type="InterPro" id="IPR014472">
    <property type="entry name" value="CHOPT"/>
</dbReference>
<dbReference type="PANTHER" id="PTHR10414:SF37">
    <property type="entry name" value="BB IN A BOXCAR, ISOFORM C"/>
    <property type="match status" value="1"/>
</dbReference>
<dbReference type="PANTHER" id="PTHR10414">
    <property type="entry name" value="ETHANOLAMINEPHOSPHOTRANSFERASE"/>
    <property type="match status" value="1"/>
</dbReference>
<dbReference type="Pfam" id="PF01066">
    <property type="entry name" value="CDP-OH_P_transf"/>
    <property type="match status" value="1"/>
</dbReference>
<dbReference type="PIRSF" id="PIRSF015665">
    <property type="entry name" value="CHOPT"/>
    <property type="match status" value="1"/>
</dbReference>
<dbReference type="PROSITE" id="PS00379">
    <property type="entry name" value="CDP_ALCOHOL_P_TRANSF"/>
    <property type="match status" value="1"/>
</dbReference>
<comment type="function">
    <text evidence="3 4 5 6 7">Catalyzes the final step in the CDP-choline route leading to phosphatidylcholin (PC). Preferentially uses CDP-monomethylethanolamine as aminoalcohol substrate. Shows highest activity toward di- and mono-unsaturated diacylglycerol species as lipid substrates. The CDP-choline pathway only contributes to net PC synthesis if exogenous choline is present. In its absence, this pathway recycles choline from PC turnover and may contribute to maintaining the proper PC species composition.</text>
</comment>
<comment type="catalytic activity">
    <reaction evidence="3 4">
        <text>CDP-choline + a 1,2-diacyl-sn-glycerol = a 1,2-diacyl-sn-glycero-3-phosphocholine + CMP + H(+)</text>
        <dbReference type="Rhea" id="RHEA:32939"/>
        <dbReference type="ChEBI" id="CHEBI:15378"/>
        <dbReference type="ChEBI" id="CHEBI:17815"/>
        <dbReference type="ChEBI" id="CHEBI:57643"/>
        <dbReference type="ChEBI" id="CHEBI:58779"/>
        <dbReference type="ChEBI" id="CHEBI:60377"/>
        <dbReference type="EC" id="2.7.8.2"/>
    </reaction>
    <physiologicalReaction direction="left-to-right" evidence="10">
        <dbReference type="Rhea" id="RHEA:32940"/>
    </physiologicalReaction>
</comment>
<comment type="catalytic activity">
    <reaction evidence="4">
        <text>CDP-N,N-dimethylethanolamine + a 1,2-diacyl-sn-glycerol = a 1,2-diacyl-sn-glycero-3-phospho-N,N-dimethylethanolamine + CMP + H(+)</text>
        <dbReference type="Rhea" id="RHEA:33775"/>
        <dbReference type="ChEBI" id="CHEBI:15378"/>
        <dbReference type="ChEBI" id="CHEBI:17815"/>
        <dbReference type="ChEBI" id="CHEBI:60377"/>
        <dbReference type="ChEBI" id="CHEBI:64572"/>
        <dbReference type="ChEBI" id="CHEBI:65117"/>
    </reaction>
    <physiologicalReaction direction="left-to-right" evidence="10">
        <dbReference type="Rhea" id="RHEA:33776"/>
    </physiologicalReaction>
</comment>
<comment type="cofactor">
    <cofactor evidence="4">
        <name>Mg(2+)</name>
        <dbReference type="ChEBI" id="CHEBI:18420"/>
    </cofactor>
</comment>
<comment type="activity regulation">
    <text evidence="4">Requires a divalent cation activator, and is inhibited by CMP. Activated by phospholipids, especially phosphatidylcholine.</text>
</comment>
<comment type="biophysicochemical properties">
    <kinetics>
        <KM evidence="4">100 uM for CDP-choline</KM>
        <KM evidence="4">137 uM for CDP-dimethylethanolamine</KM>
        <Vmax evidence="4">0.2 nmol/min/mg enzyme for CDP-choline</Vmax>
        <Vmax evidence="4">0.07 nmol/min/mg enzyme for CDP-dimethylethanolamine</Vmax>
    </kinetics>
</comment>
<comment type="pathway">
    <text>Phospholipid metabolism; phosphatidylcholine biosynthesis; phosphatidylcholine from phosphocholine: step 2/2.</text>
</comment>
<comment type="interaction">
    <interactant intactId="EBI-2050738">
        <id>P17898</id>
    </interactant>
    <interactant intactId="EBI-6494">
        <id>P22140</id>
        <label>EPT1</label>
    </interactant>
    <organismsDiffer>false</organismsDiffer>
    <experiments>5</experiments>
</comment>
<comment type="subcellular location">
    <subcellularLocation>
        <location>Microsome membrane</location>
        <topology>Multi-pass membrane protein</topology>
    </subcellularLocation>
    <subcellularLocation>
        <location>Endoplasmic reticulum membrane</location>
        <topology>Multi-pass membrane protein</topology>
    </subcellularLocation>
    <subcellularLocation>
        <location>Mitochondrion outer membrane</location>
        <topology>Multi-pass membrane protein</topology>
    </subcellularLocation>
</comment>
<comment type="induction">
    <text evidence="8">Repressed by inositol.</text>
</comment>
<comment type="miscellaneous">
    <text evidence="2">Present with 981 molecules/cell in log phase SD medium.</text>
</comment>
<comment type="similarity">
    <text evidence="9">Belongs to the CDP-alcohol phosphatidyltransferase class-I family.</text>
</comment>
<comment type="sequence caution" evidence="9">
    <conflict type="erroneous initiation">
        <sequence resource="EMBL-CDS" id="AAA63571"/>
    </conflict>
    <text>Extended N-terminus.</text>
</comment>
<comment type="sequence caution" evidence="9">
    <conflict type="erroneous initiation">
        <sequence resource="EMBL-CDS" id="CAA86895"/>
    </conflict>
    <text>Extended N-terminus.</text>
</comment>
<comment type="sequence caution" evidence="9">
    <conflict type="erroneous gene model prediction">
        <sequence resource="EMBL-CDS" id="CAA96012"/>
    </conflict>
</comment>
<gene>
    <name type="primary">CPT1</name>
    <name type="ordered locus">YNL130C</name>
    <name type="ORF">N1218</name>
    <name type="ORF">N1867</name>
</gene>